<dbReference type="EC" id="3.4.21.92" evidence="1"/>
<dbReference type="EMBL" id="BA000039">
    <property type="protein sequence ID" value="BAC08061.1"/>
    <property type="molecule type" value="Genomic_DNA"/>
</dbReference>
<dbReference type="RefSeq" id="NP_681299.1">
    <property type="nucleotide sequence ID" value="NC_004113.1"/>
</dbReference>
<dbReference type="RefSeq" id="WP_011056360.1">
    <property type="nucleotide sequence ID" value="NC_004113.1"/>
</dbReference>
<dbReference type="SMR" id="Q8DLI2"/>
<dbReference type="STRING" id="197221.gene:10747098"/>
<dbReference type="MEROPS" id="S14.001"/>
<dbReference type="EnsemblBacteria" id="BAC08061">
    <property type="protein sequence ID" value="BAC08061"/>
    <property type="gene ID" value="BAC08061"/>
</dbReference>
<dbReference type="KEGG" id="tel:tlr0509"/>
<dbReference type="PATRIC" id="fig|197221.4.peg.536"/>
<dbReference type="eggNOG" id="COG0740">
    <property type="taxonomic scope" value="Bacteria"/>
</dbReference>
<dbReference type="Proteomes" id="UP000000440">
    <property type="component" value="Chromosome"/>
</dbReference>
<dbReference type="GO" id="GO:0005737">
    <property type="term" value="C:cytoplasm"/>
    <property type="evidence" value="ECO:0007669"/>
    <property type="project" value="UniProtKB-SubCell"/>
</dbReference>
<dbReference type="GO" id="GO:0009368">
    <property type="term" value="C:endopeptidase Clp complex"/>
    <property type="evidence" value="ECO:0007669"/>
    <property type="project" value="TreeGrafter"/>
</dbReference>
<dbReference type="GO" id="GO:0004176">
    <property type="term" value="F:ATP-dependent peptidase activity"/>
    <property type="evidence" value="ECO:0007669"/>
    <property type="project" value="InterPro"/>
</dbReference>
<dbReference type="GO" id="GO:0051117">
    <property type="term" value="F:ATPase binding"/>
    <property type="evidence" value="ECO:0007669"/>
    <property type="project" value="TreeGrafter"/>
</dbReference>
<dbReference type="GO" id="GO:0004252">
    <property type="term" value="F:serine-type endopeptidase activity"/>
    <property type="evidence" value="ECO:0007669"/>
    <property type="project" value="UniProtKB-UniRule"/>
</dbReference>
<dbReference type="GO" id="GO:0006515">
    <property type="term" value="P:protein quality control for misfolded or incompletely synthesized proteins"/>
    <property type="evidence" value="ECO:0007669"/>
    <property type="project" value="TreeGrafter"/>
</dbReference>
<dbReference type="CDD" id="cd07017">
    <property type="entry name" value="S14_ClpP_2"/>
    <property type="match status" value="1"/>
</dbReference>
<dbReference type="FunFam" id="3.90.226.10:FF:000001">
    <property type="entry name" value="ATP-dependent Clp protease proteolytic subunit"/>
    <property type="match status" value="1"/>
</dbReference>
<dbReference type="Gene3D" id="3.90.226.10">
    <property type="entry name" value="2-enoyl-CoA Hydratase, Chain A, domain 1"/>
    <property type="match status" value="1"/>
</dbReference>
<dbReference type="HAMAP" id="MF_00444">
    <property type="entry name" value="ClpP"/>
    <property type="match status" value="1"/>
</dbReference>
<dbReference type="InterPro" id="IPR001907">
    <property type="entry name" value="ClpP"/>
</dbReference>
<dbReference type="InterPro" id="IPR029045">
    <property type="entry name" value="ClpP/crotonase-like_dom_sf"/>
</dbReference>
<dbReference type="InterPro" id="IPR023562">
    <property type="entry name" value="ClpP/TepA"/>
</dbReference>
<dbReference type="InterPro" id="IPR033135">
    <property type="entry name" value="ClpP_His_AS"/>
</dbReference>
<dbReference type="InterPro" id="IPR018215">
    <property type="entry name" value="ClpP_Ser_AS"/>
</dbReference>
<dbReference type="NCBIfam" id="TIGR00493">
    <property type="entry name" value="clpP"/>
    <property type="match status" value="1"/>
</dbReference>
<dbReference type="NCBIfam" id="NF001368">
    <property type="entry name" value="PRK00277.1"/>
    <property type="match status" value="1"/>
</dbReference>
<dbReference type="NCBIfam" id="NF009205">
    <property type="entry name" value="PRK12553.1"/>
    <property type="match status" value="1"/>
</dbReference>
<dbReference type="PANTHER" id="PTHR10381">
    <property type="entry name" value="ATP-DEPENDENT CLP PROTEASE PROTEOLYTIC SUBUNIT"/>
    <property type="match status" value="1"/>
</dbReference>
<dbReference type="PANTHER" id="PTHR10381:SF70">
    <property type="entry name" value="ATP-DEPENDENT CLP PROTEASE PROTEOLYTIC SUBUNIT"/>
    <property type="match status" value="1"/>
</dbReference>
<dbReference type="Pfam" id="PF00574">
    <property type="entry name" value="CLP_protease"/>
    <property type="match status" value="1"/>
</dbReference>
<dbReference type="PRINTS" id="PR00127">
    <property type="entry name" value="CLPPROTEASEP"/>
</dbReference>
<dbReference type="SUPFAM" id="SSF52096">
    <property type="entry name" value="ClpP/crotonase"/>
    <property type="match status" value="1"/>
</dbReference>
<dbReference type="PROSITE" id="PS00382">
    <property type="entry name" value="CLP_PROTEASE_HIS"/>
    <property type="match status" value="1"/>
</dbReference>
<dbReference type="PROSITE" id="PS00381">
    <property type="entry name" value="CLP_PROTEASE_SER"/>
    <property type="match status" value="1"/>
</dbReference>
<name>CLPP1_THEVB</name>
<sequence>MLQSRYDHPLSAILRSPALNLPPTHANIVPMVVEQSGRGERAFDIYSRLLRERIIFLGGGAGDRRGIDDAVADSIVAQLLFLDAEDPEKDIYLYINSPGGSVTAGMAIYDTMKHIRPDVCTLCFGLAASMGAFLLSGGTPGKRMALPNARIMIHQPLGGAQGQAVDIEIQAREILYHKRKLNELLSQHTGQPIERIEADTERDFFMSAEEAKAYGLIDQVVTRQTLLSP</sequence>
<proteinExistence type="inferred from homology"/>
<feature type="chain" id="PRO_0000179681" description="ATP-dependent Clp protease proteolytic subunit 1">
    <location>
        <begin position="1"/>
        <end position="229"/>
    </location>
</feature>
<feature type="active site" description="Nucleophile" evidence="1">
    <location>
        <position position="129"/>
    </location>
</feature>
<feature type="active site" evidence="1">
    <location>
        <position position="154"/>
    </location>
</feature>
<keyword id="KW-0963">Cytoplasm</keyword>
<keyword id="KW-0378">Hydrolase</keyword>
<keyword id="KW-0645">Protease</keyword>
<keyword id="KW-1185">Reference proteome</keyword>
<keyword id="KW-0720">Serine protease</keyword>
<evidence type="ECO:0000255" key="1">
    <source>
        <dbReference type="HAMAP-Rule" id="MF_00444"/>
    </source>
</evidence>
<gene>
    <name evidence="1" type="primary">clpP1</name>
    <name type="ordered locus">tlr0509</name>
</gene>
<organism>
    <name type="scientific">Thermosynechococcus vestitus (strain NIES-2133 / IAM M-273 / BP-1)</name>
    <dbReference type="NCBI Taxonomy" id="197221"/>
    <lineage>
        <taxon>Bacteria</taxon>
        <taxon>Bacillati</taxon>
        <taxon>Cyanobacteriota</taxon>
        <taxon>Cyanophyceae</taxon>
        <taxon>Acaryochloridales</taxon>
        <taxon>Thermosynechococcaceae</taxon>
        <taxon>Thermosynechococcus</taxon>
    </lineage>
</organism>
<reference key="1">
    <citation type="journal article" date="2002" name="DNA Res.">
        <title>Complete genome structure of the thermophilic cyanobacterium Thermosynechococcus elongatus BP-1.</title>
        <authorList>
            <person name="Nakamura Y."/>
            <person name="Kaneko T."/>
            <person name="Sato S."/>
            <person name="Ikeuchi M."/>
            <person name="Katoh H."/>
            <person name="Sasamoto S."/>
            <person name="Watanabe A."/>
            <person name="Iriguchi M."/>
            <person name="Kawashima K."/>
            <person name="Kimura T."/>
            <person name="Kishida Y."/>
            <person name="Kiyokawa C."/>
            <person name="Kohara M."/>
            <person name="Matsumoto M."/>
            <person name="Matsuno A."/>
            <person name="Nakazaki N."/>
            <person name="Shimpo S."/>
            <person name="Sugimoto M."/>
            <person name="Takeuchi C."/>
            <person name="Yamada M."/>
            <person name="Tabata S."/>
        </authorList>
    </citation>
    <scope>NUCLEOTIDE SEQUENCE [LARGE SCALE GENOMIC DNA]</scope>
    <source>
        <strain>NIES-2133 / IAM M-273 / BP-1</strain>
    </source>
</reference>
<protein>
    <recommendedName>
        <fullName evidence="1">ATP-dependent Clp protease proteolytic subunit 1</fullName>
        <ecNumber evidence="1">3.4.21.92</ecNumber>
    </recommendedName>
    <alternativeName>
        <fullName evidence="1">Endopeptidase Clp 1</fullName>
    </alternativeName>
</protein>
<accession>Q8DLI2</accession>
<comment type="function">
    <text evidence="1">Cleaves peptides in various proteins in a process that requires ATP hydrolysis. Has a chymotrypsin-like activity. Plays a major role in the degradation of misfolded proteins.</text>
</comment>
<comment type="catalytic activity">
    <reaction evidence="1">
        <text>Hydrolysis of proteins to small peptides in the presence of ATP and magnesium. alpha-casein is the usual test substrate. In the absence of ATP, only oligopeptides shorter than five residues are hydrolyzed (such as succinyl-Leu-Tyr-|-NHMec, and Leu-Tyr-Leu-|-Tyr-Trp, in which cleavage of the -Tyr-|-Leu- and -Tyr-|-Trp bonds also occurs).</text>
        <dbReference type="EC" id="3.4.21.92"/>
    </reaction>
</comment>
<comment type="subunit">
    <text evidence="1">Fourteen ClpP subunits assemble into 2 heptameric rings which stack back to back to give a disk-like structure with a central cavity, resembling the structure of eukaryotic proteasomes.</text>
</comment>
<comment type="subcellular location">
    <subcellularLocation>
        <location evidence="1">Cytoplasm</location>
    </subcellularLocation>
</comment>
<comment type="similarity">
    <text evidence="1">Belongs to the peptidase S14 family.</text>
</comment>